<accession>P85094</accession>
<protein>
    <recommendedName>
        <fullName>Isochorismatase domain-containing protein 2A</fullName>
    </recommendedName>
</protein>
<feature type="chain" id="PRO_0000282952" description="Isochorismatase domain-containing protein 2A">
    <location>
        <begin position="1"/>
        <end position="206"/>
    </location>
</feature>
<feature type="modified residue" description="N6-succinyllysine" evidence="7">
    <location>
        <position position="26"/>
    </location>
</feature>
<feature type="modified residue" description="N6-acetyllysine; alternate" evidence="6">
    <location>
        <position position="93"/>
    </location>
</feature>
<feature type="modified residue" description="N6-succinyllysine; alternate" evidence="7">
    <location>
        <position position="93"/>
    </location>
</feature>
<feature type="modified residue" description="N6-acetyllysine; alternate" evidence="5 6">
    <location>
        <position position="178"/>
    </location>
</feature>
<feature type="modified residue" description="N6-succinyllysine; alternate" evidence="7">
    <location>
        <position position="178"/>
    </location>
</feature>
<feature type="modified residue" description="N6-acetyllysine" evidence="6">
    <location>
        <position position="182"/>
    </location>
</feature>
<feature type="modified residue" description="N6-acetyllysine" evidence="6">
    <location>
        <position position="185"/>
    </location>
</feature>
<keyword id="KW-0007">Acetylation</keyword>
<keyword id="KW-0963">Cytoplasm</keyword>
<keyword id="KW-0539">Nucleus</keyword>
<keyword id="KW-1185">Reference proteome</keyword>
<name>ISC2A_MOUSE</name>
<gene>
    <name evidence="4" type="primary">Isoc2a</name>
    <name evidence="4" type="synonym">Isoc2</name>
</gene>
<dbReference type="EMBL" id="AC157563">
    <property type="status" value="NOT_ANNOTATED_CDS"/>
    <property type="molecule type" value="Genomic_DNA"/>
</dbReference>
<dbReference type="CCDS" id="CCDS51978.1"/>
<dbReference type="RefSeq" id="NP_001095068.1">
    <property type="nucleotide sequence ID" value="NM_001101598.1"/>
</dbReference>
<dbReference type="SMR" id="P85094"/>
<dbReference type="BioGRID" id="576866">
    <property type="interactions" value="3"/>
</dbReference>
<dbReference type="FunCoup" id="P85094">
    <property type="interactions" value="1691"/>
</dbReference>
<dbReference type="STRING" id="10090.ENSMUSP00000131514"/>
<dbReference type="GlyGen" id="P85094">
    <property type="glycosylation" value="2 sites, 1 O-linked glycan (1 site)"/>
</dbReference>
<dbReference type="iPTMnet" id="P85094"/>
<dbReference type="PhosphoSitePlus" id="P85094"/>
<dbReference type="SwissPalm" id="P85094"/>
<dbReference type="jPOST" id="P85094"/>
<dbReference type="PaxDb" id="10090-ENSMUSP00000131514"/>
<dbReference type="PeptideAtlas" id="P85094"/>
<dbReference type="ProteomicsDB" id="301674"/>
<dbReference type="Pumba" id="P85094"/>
<dbReference type="TopDownProteomics" id="P85094"/>
<dbReference type="Ensembl" id="ENSMUST00000125249.3">
    <property type="protein sequence ID" value="ENSMUSP00000131514.2"/>
    <property type="gene ID" value="ENSMUSG00000086784.3"/>
</dbReference>
<dbReference type="GeneID" id="664994"/>
<dbReference type="KEGG" id="mmu:664994"/>
<dbReference type="UCSC" id="uc012ewz.1">
    <property type="organism name" value="mouse"/>
</dbReference>
<dbReference type="AGR" id="MGI:3609243"/>
<dbReference type="CTD" id="664994"/>
<dbReference type="MGI" id="MGI:3609243">
    <property type="gene designation" value="Isoc2a"/>
</dbReference>
<dbReference type="VEuPathDB" id="HostDB:ENSMUSG00000086784"/>
<dbReference type="eggNOG" id="KOG4044">
    <property type="taxonomic scope" value="Eukaryota"/>
</dbReference>
<dbReference type="GeneTree" id="ENSGT00390000006753"/>
<dbReference type="HOGENOM" id="CLU_066901_0_1_1"/>
<dbReference type="InParanoid" id="P85094"/>
<dbReference type="OMA" id="HVCVFQT"/>
<dbReference type="OrthoDB" id="269496at2759"/>
<dbReference type="PhylomeDB" id="P85094"/>
<dbReference type="TreeFam" id="TF313459"/>
<dbReference type="BioGRID-ORCS" id="664994">
    <property type="hits" value="0 hits in 76 CRISPR screens"/>
</dbReference>
<dbReference type="ChiTaRS" id="Isoc2a">
    <property type="organism name" value="mouse"/>
</dbReference>
<dbReference type="PRO" id="PR:P85094"/>
<dbReference type="Proteomes" id="UP000000589">
    <property type="component" value="Chromosome 7"/>
</dbReference>
<dbReference type="RNAct" id="P85094">
    <property type="molecule type" value="protein"/>
</dbReference>
<dbReference type="Bgee" id="ENSMUSG00000086784">
    <property type="expression patterns" value="Expressed in adult mammalian kidney and 58 other cell types or tissues"/>
</dbReference>
<dbReference type="GO" id="GO:0005739">
    <property type="term" value="C:mitochondrion"/>
    <property type="evidence" value="ECO:0007005"/>
    <property type="project" value="MGI"/>
</dbReference>
<dbReference type="GO" id="GO:0005634">
    <property type="term" value="C:nucleus"/>
    <property type="evidence" value="ECO:0007669"/>
    <property type="project" value="UniProtKB-SubCell"/>
</dbReference>
<dbReference type="CDD" id="cd01012">
    <property type="entry name" value="YcaC_related"/>
    <property type="match status" value="1"/>
</dbReference>
<dbReference type="FunFam" id="3.40.50.850:FF:000001">
    <property type="entry name" value="Isochorismatase domain-containing protein 1"/>
    <property type="match status" value="1"/>
</dbReference>
<dbReference type="Gene3D" id="3.40.50.850">
    <property type="entry name" value="Isochorismatase-like"/>
    <property type="match status" value="1"/>
</dbReference>
<dbReference type="InterPro" id="IPR000868">
    <property type="entry name" value="Isochorismatase-like_dom"/>
</dbReference>
<dbReference type="InterPro" id="IPR036380">
    <property type="entry name" value="Isochorismatase-like_sf"/>
</dbReference>
<dbReference type="InterPro" id="IPR050993">
    <property type="entry name" value="Isochorismatase_domain"/>
</dbReference>
<dbReference type="PANTHER" id="PTHR14119">
    <property type="entry name" value="HYDROLASE"/>
    <property type="match status" value="1"/>
</dbReference>
<dbReference type="PANTHER" id="PTHR14119:SF3">
    <property type="entry name" value="ISOCHORISMATASE DOMAIN-CONTAINING PROTEIN 2"/>
    <property type="match status" value="1"/>
</dbReference>
<dbReference type="Pfam" id="PF00857">
    <property type="entry name" value="Isochorismatase"/>
    <property type="match status" value="1"/>
</dbReference>
<dbReference type="SUPFAM" id="SSF52499">
    <property type="entry name" value="Isochorismatase-like hydrolases"/>
    <property type="match status" value="1"/>
</dbReference>
<reference key="1">
    <citation type="journal article" date="2009" name="PLoS Biol.">
        <title>Lineage-specific biology revealed by a finished genome assembly of the mouse.</title>
        <authorList>
            <person name="Church D.M."/>
            <person name="Goodstadt L."/>
            <person name="Hillier L.W."/>
            <person name="Zody M.C."/>
            <person name="Goldstein S."/>
            <person name="She X."/>
            <person name="Bult C.J."/>
            <person name="Agarwala R."/>
            <person name="Cherry J.L."/>
            <person name="DiCuccio M."/>
            <person name="Hlavina W."/>
            <person name="Kapustin Y."/>
            <person name="Meric P."/>
            <person name="Maglott D."/>
            <person name="Birtle Z."/>
            <person name="Marques A.C."/>
            <person name="Graves T."/>
            <person name="Zhou S."/>
            <person name="Teague B."/>
            <person name="Potamousis K."/>
            <person name="Churas C."/>
            <person name="Place M."/>
            <person name="Herschleb J."/>
            <person name="Runnheim R."/>
            <person name="Forrest D."/>
            <person name="Amos-Landgraf J."/>
            <person name="Schwartz D.C."/>
            <person name="Cheng Z."/>
            <person name="Lindblad-Toh K."/>
            <person name="Eichler E.E."/>
            <person name="Ponting C.P."/>
        </authorList>
    </citation>
    <scope>NUCLEOTIDE SEQUENCE [LARGE SCALE GENOMIC DNA]</scope>
    <source>
        <strain>C57BL/6J</strain>
    </source>
</reference>
<reference key="2">
    <citation type="journal article" date="2006" name="Mol. Cell">
        <title>Substrate and functional diversity of lysine acetylation revealed by a proteomics survey.</title>
        <authorList>
            <person name="Kim S.C."/>
            <person name="Sprung R."/>
            <person name="Chen Y."/>
            <person name="Xu Y."/>
            <person name="Ball H."/>
            <person name="Pei J."/>
            <person name="Cheng T."/>
            <person name="Kho Y."/>
            <person name="Xiao H."/>
            <person name="Xiao L."/>
            <person name="Grishin N.V."/>
            <person name="White M."/>
            <person name="Yang X.-J."/>
            <person name="Zhao Y."/>
        </authorList>
    </citation>
    <scope>ACETYLATION [LARGE SCALE ANALYSIS] AT LYS-178</scope>
    <scope>IDENTIFICATION BY MASS SPECTROMETRY [LARGE SCALE ANALYSIS]</scope>
    <source>
        <tissue>Liver</tissue>
    </source>
</reference>
<reference key="3">
    <citation type="journal article" date="2007" name="Biochem. Biophys. Res. Commun.">
        <title>Identification and characterization of a novel protein ISOC2 that interacts with p16INK4a.</title>
        <authorList>
            <person name="Huang X."/>
            <person name="Shi Z."/>
            <person name="Wang W."/>
            <person name="Bai J."/>
            <person name="Chen Z."/>
            <person name="Xu J."/>
            <person name="Zhang D."/>
            <person name="Fu S."/>
        </authorList>
    </citation>
    <scope>TISSUE SPECIFICITY</scope>
</reference>
<reference key="4">
    <citation type="journal article" date="2010" name="Cell">
        <title>A tissue-specific atlas of mouse protein phosphorylation and expression.</title>
        <authorList>
            <person name="Huttlin E.L."/>
            <person name="Jedrychowski M.P."/>
            <person name="Elias J.E."/>
            <person name="Goswami T."/>
            <person name="Rad R."/>
            <person name="Beausoleil S.A."/>
            <person name="Villen J."/>
            <person name="Haas W."/>
            <person name="Sowa M.E."/>
            <person name="Gygi S.P."/>
        </authorList>
    </citation>
    <scope>IDENTIFICATION BY MASS SPECTROMETRY [LARGE SCALE ANALYSIS]</scope>
    <source>
        <tissue>Brain</tissue>
        <tissue>Brown adipose tissue</tissue>
        <tissue>Heart</tissue>
        <tissue>Kidney</tissue>
        <tissue>Liver</tissue>
        <tissue>Lung</tissue>
        <tissue>Pancreas</tissue>
        <tissue>Spleen</tissue>
        <tissue>Testis</tissue>
    </source>
</reference>
<reference key="5">
    <citation type="journal article" date="2013" name="Mol. Cell">
        <title>SIRT5-mediated lysine desuccinylation impacts diverse metabolic pathways.</title>
        <authorList>
            <person name="Park J."/>
            <person name="Chen Y."/>
            <person name="Tishkoff D.X."/>
            <person name="Peng C."/>
            <person name="Tan M."/>
            <person name="Dai L."/>
            <person name="Xie Z."/>
            <person name="Zhang Y."/>
            <person name="Zwaans B.M."/>
            <person name="Skinner M.E."/>
            <person name="Lombard D.B."/>
            <person name="Zhao Y."/>
        </authorList>
    </citation>
    <scope>SUCCINYLATION [LARGE SCALE ANALYSIS] AT LYS-26; LYS-93 AND LYS-178</scope>
    <scope>IDENTIFICATION BY MASS SPECTROMETRY [LARGE SCALE ANALYSIS]</scope>
    <source>
        <tissue>Liver</tissue>
    </source>
</reference>
<reference key="6">
    <citation type="journal article" date="2013" name="Proc. Natl. Acad. Sci. U.S.A.">
        <title>Label-free quantitative proteomics of the lysine acetylome in mitochondria identifies substrates of SIRT3 in metabolic pathways.</title>
        <authorList>
            <person name="Rardin M.J."/>
            <person name="Newman J.C."/>
            <person name="Held J.M."/>
            <person name="Cusack M.P."/>
            <person name="Sorensen D.J."/>
            <person name="Li B."/>
            <person name="Schilling B."/>
            <person name="Mooney S.D."/>
            <person name="Kahn C.R."/>
            <person name="Verdin E."/>
            <person name="Gibson B.W."/>
        </authorList>
    </citation>
    <scope>ACETYLATION [LARGE SCALE ANALYSIS] AT LYS-93; LYS-178; LYS-182 AND LYS-185</scope>
    <scope>IDENTIFICATION BY MASS SPECTROMETRY [LARGE SCALE ANALYSIS]</scope>
    <source>
        <tissue>Liver</tissue>
    </source>
</reference>
<comment type="subunit">
    <text evidence="1">Interacts with CDKN2A.</text>
</comment>
<comment type="subcellular location">
    <subcellularLocation>
        <location evidence="1">Cytoplasm</location>
    </subcellularLocation>
    <subcellularLocation>
        <location evidence="1">Nucleus</location>
    </subcellularLocation>
    <text evidence="1">Localizes to the nucleus in the presence of CDKN2A.</text>
</comment>
<comment type="tissue specificity">
    <text evidence="3">Ubiquitous. Expressed predominantly in uterus, stomach and urinary tract.</text>
</comment>
<comment type="similarity">
    <text evidence="2">Belongs to the isochorismatase family.</text>
</comment>
<evidence type="ECO:0000250" key="1"/>
<evidence type="ECO:0000255" key="2"/>
<evidence type="ECO:0000269" key="3">
    <source>
    </source>
</evidence>
<evidence type="ECO:0000312" key="4">
    <source>
        <dbReference type="MGI" id="MGI:3609243"/>
    </source>
</evidence>
<evidence type="ECO:0007744" key="5">
    <source>
    </source>
</evidence>
<evidence type="ECO:0007744" key="6">
    <source>
    </source>
</evidence>
<evidence type="ECO:0007744" key="7">
    <source>
    </source>
</evidence>
<organism>
    <name type="scientific">Mus musculus</name>
    <name type="common">Mouse</name>
    <dbReference type="NCBI Taxonomy" id="10090"/>
    <lineage>
        <taxon>Eukaryota</taxon>
        <taxon>Metazoa</taxon>
        <taxon>Chordata</taxon>
        <taxon>Craniata</taxon>
        <taxon>Vertebrata</taxon>
        <taxon>Euteleostomi</taxon>
        <taxon>Mammalia</taxon>
        <taxon>Eutheria</taxon>
        <taxon>Euarchontoglires</taxon>
        <taxon>Glires</taxon>
        <taxon>Rodentia</taxon>
        <taxon>Myomorpha</taxon>
        <taxon>Muroidea</taxon>
        <taxon>Muridae</taxon>
        <taxon>Murinae</taxon>
        <taxon>Mus</taxon>
        <taxon>Mus</taxon>
    </lineage>
</organism>
<sequence>MAAARASLGRILPESSILFLCDLQEKFRPSIAYFPQIVSVAARMLKVARLLDVPILLTEQYPEGLGPTVPELGAQGIRPVSKTCFSMVPALQKELDGRSQLQSVLLCGIETQACILNTALDLLHRGLQVHVVVDACSSRSQVDRLVALARMRQSGAFLATSESLILQLVRDASHPQFKEIQKIIKEPVPDSGLLSLFQGQSPLTSC</sequence>
<proteinExistence type="evidence at protein level"/>